<feature type="chain" id="PRO_1000204870" description="tRNA (guanine(26)-N(2))-dimethyltransferase">
    <location>
        <begin position="1"/>
        <end position="378"/>
    </location>
</feature>
<feature type="domain" description="Trm1 methyltransferase" evidence="1">
    <location>
        <begin position="4"/>
        <end position="374"/>
    </location>
</feature>
<feature type="binding site" evidence="1">
    <location>
        <position position="44"/>
    </location>
    <ligand>
        <name>S-adenosyl-L-methionine</name>
        <dbReference type="ChEBI" id="CHEBI:59789"/>
    </ligand>
</feature>
<feature type="binding site" evidence="1">
    <location>
        <position position="69"/>
    </location>
    <ligand>
        <name>S-adenosyl-L-methionine</name>
        <dbReference type="ChEBI" id="CHEBI:59789"/>
    </ligand>
</feature>
<feature type="binding site" evidence="1">
    <location>
        <position position="87"/>
    </location>
    <ligand>
        <name>S-adenosyl-L-methionine</name>
        <dbReference type="ChEBI" id="CHEBI:59789"/>
    </ligand>
</feature>
<feature type="binding site" evidence="1">
    <location>
        <position position="114"/>
    </location>
    <ligand>
        <name>S-adenosyl-L-methionine</name>
        <dbReference type="ChEBI" id="CHEBI:59789"/>
    </ligand>
</feature>
<feature type="binding site" evidence="1">
    <location>
        <position position="115"/>
    </location>
    <ligand>
        <name>S-adenosyl-L-methionine</name>
        <dbReference type="ChEBI" id="CHEBI:59789"/>
    </ligand>
</feature>
<feature type="binding site" evidence="1">
    <location>
        <position position="246"/>
    </location>
    <ligand>
        <name>Zn(2+)</name>
        <dbReference type="ChEBI" id="CHEBI:29105"/>
    </ligand>
</feature>
<feature type="binding site" evidence="1">
    <location>
        <position position="249"/>
    </location>
    <ligand>
        <name>Zn(2+)</name>
        <dbReference type="ChEBI" id="CHEBI:29105"/>
    </ligand>
</feature>
<feature type="binding site" evidence="1">
    <location>
        <position position="263"/>
    </location>
    <ligand>
        <name>Zn(2+)</name>
        <dbReference type="ChEBI" id="CHEBI:29105"/>
    </ligand>
</feature>
<feature type="binding site" evidence="1">
    <location>
        <position position="266"/>
    </location>
    <ligand>
        <name>Zn(2+)</name>
        <dbReference type="ChEBI" id="CHEBI:29105"/>
    </ligand>
</feature>
<evidence type="ECO:0000255" key="1">
    <source>
        <dbReference type="HAMAP-Rule" id="MF_00290"/>
    </source>
</evidence>
<accession>C3MYQ9</accession>
<protein>
    <recommendedName>
        <fullName evidence="1">tRNA (guanine(26)-N(2))-dimethyltransferase</fullName>
        <ecNumber evidence="1">2.1.1.216</ecNumber>
    </recommendedName>
    <alternativeName>
        <fullName evidence="1">tRNA 2,2-dimethylguanosine-26 methyltransferase</fullName>
    </alternativeName>
    <alternativeName>
        <fullName evidence="1">tRNA(guanine-26,N(2)-N(2)) methyltransferase</fullName>
    </alternativeName>
    <alternativeName>
        <fullName evidence="1">tRNA(m(2,2)G26)dimethyltransferase</fullName>
    </alternativeName>
</protein>
<name>TRM1_SACI4</name>
<organism>
    <name type="scientific">Saccharolobus islandicus (strain M.14.25 / Kamchatka #1)</name>
    <name type="common">Sulfolobus islandicus</name>
    <dbReference type="NCBI Taxonomy" id="427317"/>
    <lineage>
        <taxon>Archaea</taxon>
        <taxon>Thermoproteota</taxon>
        <taxon>Thermoprotei</taxon>
        <taxon>Sulfolobales</taxon>
        <taxon>Sulfolobaceae</taxon>
        <taxon>Saccharolobus</taxon>
    </lineage>
</organism>
<gene>
    <name evidence="1" type="primary">trm1</name>
    <name type="ordered locus">M1425_1283</name>
</gene>
<reference key="1">
    <citation type="journal article" date="2009" name="Proc. Natl. Acad. Sci. U.S.A.">
        <title>Biogeography of the Sulfolobus islandicus pan-genome.</title>
        <authorList>
            <person name="Reno M.L."/>
            <person name="Held N.L."/>
            <person name="Fields C.J."/>
            <person name="Burke P.V."/>
            <person name="Whitaker R.J."/>
        </authorList>
    </citation>
    <scope>NUCLEOTIDE SEQUENCE [LARGE SCALE GENOMIC DNA]</scope>
    <source>
        <strain>M.14.25 / Kamchatka #1</strain>
    </source>
</reference>
<keyword id="KW-0479">Metal-binding</keyword>
<keyword id="KW-0489">Methyltransferase</keyword>
<keyword id="KW-0694">RNA-binding</keyword>
<keyword id="KW-0949">S-adenosyl-L-methionine</keyword>
<keyword id="KW-0808">Transferase</keyword>
<keyword id="KW-0819">tRNA processing</keyword>
<keyword id="KW-0820">tRNA-binding</keyword>
<keyword id="KW-0862">Zinc</keyword>
<sequence length="378" mass="42918">MKLKEVTEGKVRIFVPDPKEYMIEGKFDPSWAPVFYNPKMTFNRDLSVIVVSLLKPKIILDALSATGIRGIRYYVESWKSEQLILNDKNSTAASLIQINVKNNGIENAKIYNKDANALLYEIKSEYIDIDPFGSPVPFILSSINATIRNGIVAFTATDLSPLEGSSRTSCRRKYDAINYKLSSSKELGLRILIGKIIREAATLEKTVHPLFSFYADYYYRLFVIVESGARKADENINKNLKYFGECPRCGFQTFVDENCKTKCPICGENFIIIGPLYIGPLHNMEFLKRMIDTYSDFNYLSSFNRIQKLLNVIEKEAKYKSVFYNISKLASKLKVSAIPPIDSILECLGDASKTHFAPTGIRTDKGYEEIIRCVKSLR</sequence>
<proteinExistence type="inferred from homology"/>
<comment type="function">
    <text evidence="1">Dimethylates a single guanine residue at position 26 of a number of tRNAs using S-adenosyl-L-methionine as donor of the methyl groups.</text>
</comment>
<comment type="catalytic activity">
    <reaction evidence="1">
        <text>guanosine(26) in tRNA + 2 S-adenosyl-L-methionine = N(2)-dimethylguanosine(26) in tRNA + 2 S-adenosyl-L-homocysteine + 2 H(+)</text>
        <dbReference type="Rhea" id="RHEA:43140"/>
        <dbReference type="Rhea" id="RHEA-COMP:10359"/>
        <dbReference type="Rhea" id="RHEA-COMP:10360"/>
        <dbReference type="ChEBI" id="CHEBI:15378"/>
        <dbReference type="ChEBI" id="CHEBI:57856"/>
        <dbReference type="ChEBI" id="CHEBI:59789"/>
        <dbReference type="ChEBI" id="CHEBI:74269"/>
        <dbReference type="ChEBI" id="CHEBI:74513"/>
        <dbReference type="EC" id="2.1.1.216"/>
    </reaction>
</comment>
<comment type="similarity">
    <text evidence="1">Belongs to the class I-like SAM-binding methyltransferase superfamily. Trm1 family.</text>
</comment>
<dbReference type="EC" id="2.1.1.216" evidence="1"/>
<dbReference type="EMBL" id="CP001400">
    <property type="protein sequence ID" value="ACP38038.1"/>
    <property type="molecule type" value="Genomic_DNA"/>
</dbReference>
<dbReference type="RefSeq" id="WP_012711290.1">
    <property type="nucleotide sequence ID" value="NC_012588.1"/>
</dbReference>
<dbReference type="SMR" id="C3MYQ9"/>
<dbReference type="KEGG" id="sia:M1425_1283"/>
<dbReference type="HOGENOM" id="CLU_010862_5_1_2"/>
<dbReference type="Proteomes" id="UP000001350">
    <property type="component" value="Chromosome"/>
</dbReference>
<dbReference type="GO" id="GO:0160104">
    <property type="term" value="F:tRNA (guanine(26)-N2)-dimethyltransferase activity"/>
    <property type="evidence" value="ECO:0007669"/>
    <property type="project" value="UniProtKB-UniRule"/>
</dbReference>
<dbReference type="GO" id="GO:0000049">
    <property type="term" value="F:tRNA binding"/>
    <property type="evidence" value="ECO:0007669"/>
    <property type="project" value="UniProtKB-KW"/>
</dbReference>
<dbReference type="GO" id="GO:0002940">
    <property type="term" value="P:tRNA N2-guanine methylation"/>
    <property type="evidence" value="ECO:0007669"/>
    <property type="project" value="TreeGrafter"/>
</dbReference>
<dbReference type="FunFam" id="3.40.50.150:FF:000272">
    <property type="entry name" value="tRNA (guanine(26)-N(2))-dimethyltransferase"/>
    <property type="match status" value="1"/>
</dbReference>
<dbReference type="Gene3D" id="3.30.56.70">
    <property type="entry name" value="N2,N2-dimethylguanosine tRNA methyltransferase, C-terminal domain"/>
    <property type="match status" value="1"/>
</dbReference>
<dbReference type="Gene3D" id="3.40.50.150">
    <property type="entry name" value="Vaccinia Virus protein VP39"/>
    <property type="match status" value="1"/>
</dbReference>
<dbReference type="HAMAP" id="MF_00290">
    <property type="entry name" value="tRNA_dimethyltr_TRM1"/>
    <property type="match status" value="1"/>
</dbReference>
<dbReference type="InterPro" id="IPR029063">
    <property type="entry name" value="SAM-dependent_MTases_sf"/>
</dbReference>
<dbReference type="InterPro" id="IPR002905">
    <property type="entry name" value="Trm1"/>
</dbReference>
<dbReference type="InterPro" id="IPR022923">
    <property type="entry name" value="TRM1_arc_bac"/>
</dbReference>
<dbReference type="InterPro" id="IPR042296">
    <property type="entry name" value="tRNA_met_Trm1_C"/>
</dbReference>
<dbReference type="NCBIfam" id="NF003331">
    <property type="entry name" value="PRK04338.1-7"/>
    <property type="match status" value="1"/>
</dbReference>
<dbReference type="NCBIfam" id="TIGR00308">
    <property type="entry name" value="TRM1"/>
    <property type="match status" value="1"/>
</dbReference>
<dbReference type="PANTHER" id="PTHR10631">
    <property type="entry name" value="N 2 ,N 2 -DIMETHYLGUANOSINE TRNA METHYLTRANSFERASE"/>
    <property type="match status" value="1"/>
</dbReference>
<dbReference type="PANTHER" id="PTHR10631:SF3">
    <property type="entry name" value="TRNA (GUANINE(26)-N(2))-DIMETHYLTRANSFERASE"/>
    <property type="match status" value="1"/>
</dbReference>
<dbReference type="Pfam" id="PF02005">
    <property type="entry name" value="TRM"/>
    <property type="match status" value="1"/>
</dbReference>
<dbReference type="SUPFAM" id="SSF53335">
    <property type="entry name" value="S-adenosyl-L-methionine-dependent methyltransferases"/>
    <property type="match status" value="1"/>
</dbReference>
<dbReference type="PROSITE" id="PS51626">
    <property type="entry name" value="SAM_MT_TRM1"/>
    <property type="match status" value="1"/>
</dbReference>